<dbReference type="EC" id="6.5.1.2" evidence="1"/>
<dbReference type="EMBL" id="AE014074">
    <property type="protein sequence ID" value="AAM79098.1"/>
    <property type="molecule type" value="Genomic_DNA"/>
</dbReference>
<dbReference type="RefSeq" id="WP_011054328.1">
    <property type="nucleotide sequence ID" value="NC_004070.1"/>
</dbReference>
<dbReference type="SMR" id="P0DA72"/>
<dbReference type="KEGG" id="spg:SpyM3_0491"/>
<dbReference type="HOGENOM" id="CLU_007764_2_1_9"/>
<dbReference type="Proteomes" id="UP000000564">
    <property type="component" value="Chromosome"/>
</dbReference>
<dbReference type="GO" id="GO:0005829">
    <property type="term" value="C:cytosol"/>
    <property type="evidence" value="ECO:0007669"/>
    <property type="project" value="TreeGrafter"/>
</dbReference>
<dbReference type="GO" id="GO:0003677">
    <property type="term" value="F:DNA binding"/>
    <property type="evidence" value="ECO:0007669"/>
    <property type="project" value="InterPro"/>
</dbReference>
<dbReference type="GO" id="GO:0003911">
    <property type="term" value="F:DNA ligase (NAD+) activity"/>
    <property type="evidence" value="ECO:0007669"/>
    <property type="project" value="UniProtKB-UniRule"/>
</dbReference>
<dbReference type="GO" id="GO:0046872">
    <property type="term" value="F:metal ion binding"/>
    <property type="evidence" value="ECO:0007669"/>
    <property type="project" value="UniProtKB-KW"/>
</dbReference>
<dbReference type="GO" id="GO:0006281">
    <property type="term" value="P:DNA repair"/>
    <property type="evidence" value="ECO:0007669"/>
    <property type="project" value="UniProtKB-KW"/>
</dbReference>
<dbReference type="GO" id="GO:0006260">
    <property type="term" value="P:DNA replication"/>
    <property type="evidence" value="ECO:0007669"/>
    <property type="project" value="UniProtKB-KW"/>
</dbReference>
<dbReference type="CDD" id="cd17748">
    <property type="entry name" value="BRCT_DNA_ligase_like"/>
    <property type="match status" value="1"/>
</dbReference>
<dbReference type="CDD" id="cd00114">
    <property type="entry name" value="LIGANc"/>
    <property type="match status" value="1"/>
</dbReference>
<dbReference type="FunFam" id="1.10.150.20:FF:000007">
    <property type="entry name" value="DNA ligase"/>
    <property type="match status" value="1"/>
</dbReference>
<dbReference type="FunFam" id="1.10.287.610:FF:000002">
    <property type="entry name" value="DNA ligase"/>
    <property type="match status" value="1"/>
</dbReference>
<dbReference type="FunFam" id="2.40.50.140:FF:000012">
    <property type="entry name" value="DNA ligase"/>
    <property type="match status" value="1"/>
</dbReference>
<dbReference type="FunFam" id="3.30.470.30:FF:000001">
    <property type="entry name" value="DNA ligase"/>
    <property type="match status" value="1"/>
</dbReference>
<dbReference type="Gene3D" id="6.20.10.30">
    <property type="match status" value="1"/>
</dbReference>
<dbReference type="Gene3D" id="1.10.150.20">
    <property type="entry name" value="5' to 3' exonuclease, C-terminal subdomain"/>
    <property type="match status" value="2"/>
</dbReference>
<dbReference type="Gene3D" id="3.40.50.10190">
    <property type="entry name" value="BRCT domain"/>
    <property type="match status" value="1"/>
</dbReference>
<dbReference type="Gene3D" id="3.30.470.30">
    <property type="entry name" value="DNA ligase/mRNA capping enzyme"/>
    <property type="match status" value="1"/>
</dbReference>
<dbReference type="Gene3D" id="1.10.287.610">
    <property type="entry name" value="Helix hairpin bin"/>
    <property type="match status" value="1"/>
</dbReference>
<dbReference type="Gene3D" id="2.40.50.140">
    <property type="entry name" value="Nucleic acid-binding proteins"/>
    <property type="match status" value="1"/>
</dbReference>
<dbReference type="HAMAP" id="MF_01588">
    <property type="entry name" value="DNA_ligase_A"/>
    <property type="match status" value="1"/>
</dbReference>
<dbReference type="InterPro" id="IPR001357">
    <property type="entry name" value="BRCT_dom"/>
</dbReference>
<dbReference type="InterPro" id="IPR036420">
    <property type="entry name" value="BRCT_dom_sf"/>
</dbReference>
<dbReference type="InterPro" id="IPR041663">
    <property type="entry name" value="DisA/LigA_HHH"/>
</dbReference>
<dbReference type="InterPro" id="IPR001679">
    <property type="entry name" value="DNA_ligase"/>
</dbReference>
<dbReference type="InterPro" id="IPR018239">
    <property type="entry name" value="DNA_ligase_AS"/>
</dbReference>
<dbReference type="InterPro" id="IPR033136">
    <property type="entry name" value="DNA_ligase_CS"/>
</dbReference>
<dbReference type="InterPro" id="IPR013839">
    <property type="entry name" value="DNAligase_adenylation"/>
</dbReference>
<dbReference type="InterPro" id="IPR013840">
    <property type="entry name" value="DNAligase_N"/>
</dbReference>
<dbReference type="InterPro" id="IPR003583">
    <property type="entry name" value="Hlx-hairpin-Hlx_DNA-bd_motif"/>
</dbReference>
<dbReference type="InterPro" id="IPR012340">
    <property type="entry name" value="NA-bd_OB-fold"/>
</dbReference>
<dbReference type="InterPro" id="IPR004150">
    <property type="entry name" value="NAD_DNA_ligase_OB"/>
</dbReference>
<dbReference type="InterPro" id="IPR010994">
    <property type="entry name" value="RuvA_2-like"/>
</dbReference>
<dbReference type="InterPro" id="IPR004149">
    <property type="entry name" value="Znf_DNAligase_C4"/>
</dbReference>
<dbReference type="NCBIfam" id="TIGR00575">
    <property type="entry name" value="dnlj"/>
    <property type="match status" value="1"/>
</dbReference>
<dbReference type="NCBIfam" id="NF005932">
    <property type="entry name" value="PRK07956.1"/>
    <property type="match status" value="1"/>
</dbReference>
<dbReference type="PANTHER" id="PTHR23389">
    <property type="entry name" value="CHROMOSOME TRANSMISSION FIDELITY FACTOR 18"/>
    <property type="match status" value="1"/>
</dbReference>
<dbReference type="PANTHER" id="PTHR23389:SF9">
    <property type="entry name" value="DNA LIGASE"/>
    <property type="match status" value="1"/>
</dbReference>
<dbReference type="Pfam" id="PF00533">
    <property type="entry name" value="BRCT"/>
    <property type="match status" value="1"/>
</dbReference>
<dbReference type="Pfam" id="PF01653">
    <property type="entry name" value="DNA_ligase_aden"/>
    <property type="match status" value="1"/>
</dbReference>
<dbReference type="Pfam" id="PF03120">
    <property type="entry name" value="DNA_ligase_OB"/>
    <property type="match status" value="1"/>
</dbReference>
<dbReference type="Pfam" id="PF03119">
    <property type="entry name" value="DNA_ligase_ZBD"/>
    <property type="match status" value="1"/>
</dbReference>
<dbReference type="Pfam" id="PF12826">
    <property type="entry name" value="HHH_2"/>
    <property type="match status" value="1"/>
</dbReference>
<dbReference type="Pfam" id="PF14520">
    <property type="entry name" value="HHH_5"/>
    <property type="match status" value="1"/>
</dbReference>
<dbReference type="PIRSF" id="PIRSF001604">
    <property type="entry name" value="LigA"/>
    <property type="match status" value="1"/>
</dbReference>
<dbReference type="SMART" id="SM00292">
    <property type="entry name" value="BRCT"/>
    <property type="match status" value="1"/>
</dbReference>
<dbReference type="SMART" id="SM00278">
    <property type="entry name" value="HhH1"/>
    <property type="match status" value="3"/>
</dbReference>
<dbReference type="SMART" id="SM00532">
    <property type="entry name" value="LIGANc"/>
    <property type="match status" value="1"/>
</dbReference>
<dbReference type="SUPFAM" id="SSF52113">
    <property type="entry name" value="BRCT domain"/>
    <property type="match status" value="1"/>
</dbReference>
<dbReference type="SUPFAM" id="SSF56091">
    <property type="entry name" value="DNA ligase/mRNA capping enzyme, catalytic domain"/>
    <property type="match status" value="1"/>
</dbReference>
<dbReference type="SUPFAM" id="SSF50249">
    <property type="entry name" value="Nucleic acid-binding proteins"/>
    <property type="match status" value="1"/>
</dbReference>
<dbReference type="SUPFAM" id="SSF47781">
    <property type="entry name" value="RuvA domain 2-like"/>
    <property type="match status" value="1"/>
</dbReference>
<dbReference type="PROSITE" id="PS50172">
    <property type="entry name" value="BRCT"/>
    <property type="match status" value="1"/>
</dbReference>
<dbReference type="PROSITE" id="PS01055">
    <property type="entry name" value="DNA_LIGASE_N1"/>
    <property type="match status" value="1"/>
</dbReference>
<dbReference type="PROSITE" id="PS01056">
    <property type="entry name" value="DNA_LIGASE_N2"/>
    <property type="match status" value="1"/>
</dbReference>
<evidence type="ECO:0000255" key="1">
    <source>
        <dbReference type="HAMAP-Rule" id="MF_01588"/>
    </source>
</evidence>
<accession>P0DA72</accession>
<accession>Q79WQ0</accession>
<accession>Q8K831</accession>
<keyword id="KW-0227">DNA damage</keyword>
<keyword id="KW-0234">DNA repair</keyword>
<keyword id="KW-0235">DNA replication</keyword>
<keyword id="KW-0436">Ligase</keyword>
<keyword id="KW-0460">Magnesium</keyword>
<keyword id="KW-0464">Manganese</keyword>
<keyword id="KW-0479">Metal-binding</keyword>
<keyword id="KW-0520">NAD</keyword>
<keyword id="KW-0862">Zinc</keyword>
<name>DNLJ_STRP3</name>
<gene>
    <name evidence="1" type="primary">ligA</name>
    <name type="ordered locus">SpyM3_0491</name>
</gene>
<proteinExistence type="inferred from homology"/>
<reference key="1">
    <citation type="journal article" date="2002" name="Proc. Natl. Acad. Sci. U.S.A.">
        <title>Genome sequence of a serotype M3 strain of group A Streptococcus: phage-encoded toxins, the high-virulence phenotype, and clone emergence.</title>
        <authorList>
            <person name="Beres S.B."/>
            <person name="Sylva G.L."/>
            <person name="Barbian K.D."/>
            <person name="Lei B."/>
            <person name="Hoff J.S."/>
            <person name="Mammarella N.D."/>
            <person name="Liu M.-Y."/>
            <person name="Smoot J.C."/>
            <person name="Porcella S.F."/>
            <person name="Parkins L.D."/>
            <person name="Campbell D.S."/>
            <person name="Smith T.M."/>
            <person name="McCormick J.K."/>
            <person name="Leung D.Y.M."/>
            <person name="Schlievert P.M."/>
            <person name="Musser J.M."/>
        </authorList>
    </citation>
    <scope>NUCLEOTIDE SEQUENCE [LARGE SCALE GENOMIC DNA]</scope>
    <source>
        <strain>ATCC BAA-595 / MGAS315</strain>
    </source>
</reference>
<comment type="function">
    <text evidence="1">DNA ligase that catalyzes the formation of phosphodiester linkages between 5'-phosphoryl and 3'-hydroxyl groups in double-stranded DNA using NAD as a coenzyme and as the energy source for the reaction. It is essential for DNA replication and repair of damaged DNA.</text>
</comment>
<comment type="catalytic activity">
    <reaction evidence="1">
        <text>NAD(+) + (deoxyribonucleotide)n-3'-hydroxyl + 5'-phospho-(deoxyribonucleotide)m = (deoxyribonucleotide)n+m + AMP + beta-nicotinamide D-nucleotide.</text>
        <dbReference type="EC" id="6.5.1.2"/>
    </reaction>
</comment>
<comment type="cofactor">
    <cofactor evidence="1">
        <name>Mg(2+)</name>
        <dbReference type="ChEBI" id="CHEBI:18420"/>
    </cofactor>
    <cofactor evidence="1">
        <name>Mn(2+)</name>
        <dbReference type="ChEBI" id="CHEBI:29035"/>
    </cofactor>
</comment>
<comment type="similarity">
    <text evidence="1">Belongs to the NAD-dependent DNA ligase family. LigA subfamily.</text>
</comment>
<protein>
    <recommendedName>
        <fullName evidence="1">DNA ligase</fullName>
        <ecNumber evidence="1">6.5.1.2</ecNumber>
    </recommendedName>
    <alternativeName>
        <fullName evidence="1">Polydeoxyribonucleotide synthase [NAD(+)]</fullName>
    </alternativeName>
</protein>
<organism>
    <name type="scientific">Streptococcus pyogenes serotype M3 (strain ATCC BAA-595 / MGAS315)</name>
    <dbReference type="NCBI Taxonomy" id="198466"/>
    <lineage>
        <taxon>Bacteria</taxon>
        <taxon>Bacillati</taxon>
        <taxon>Bacillota</taxon>
        <taxon>Bacilli</taxon>
        <taxon>Lactobacillales</taxon>
        <taxon>Streptococcaceae</taxon>
        <taxon>Streptococcus</taxon>
    </lineage>
</organism>
<sequence>MKKRIKELTDLLNRYRYDYYTKDAPSVSDSDYDKLYRELVTLEQSYPEYVLQDSPTQQVGGTILKGFEKYRHQYPLFSLQDAFSREELDAFDKRVKAEFPNATYLAELKIDGLSISLSYENGFLQVGATRGDGNIGENITENIKKIKDIPHQLSEPLTITVRGEAYMSRQSFKAINEGRQENGETEFANPRNAAAGTLRQLDTAVVAKRQLATFLYQEVSPTARNQQNEVLAELADLGFSVNPYYQLTSSMDEIWDFIKTIEAKRDQLAYDIDGVVIKVNSLAMQEELGFTVKAPRWAIAYKFPAEEKEAEILSVDWTVGRTGVVTPTANLTPVQLAGTTVSRATLHNVDYIAEKDIRIGDTVIVYKAGDIIPAVLNVVMSKRNQQEVMLIPKLCPSCGSELVHFEDEVALRCINPLCPSLIQRSLEHFASRDAMNITGLGPAIVEKLFLAGFVHDVADIYQLTKEDFMQLDGIKEKSADKLLAAIEASKSNSAEKLLFGLGIRHIGSKVSRLILEVYGDISALLTAKEEEIARIDGLGSTIAQSLTQYFEQKTAAILVDELKTAGVNMHYSGQKVNSDAALFGLTVVLTGKLNQLNRNEAKDKLEALGAKVTGSVSKKTDLVIAGSDAGSKLEKAKSLGIRIEDEDWLRQL</sequence>
<feature type="chain" id="PRO_0000313463" description="DNA ligase">
    <location>
        <begin position="1"/>
        <end position="652"/>
    </location>
</feature>
<feature type="domain" description="BRCT" evidence="1">
    <location>
        <begin position="577"/>
        <end position="652"/>
    </location>
</feature>
<feature type="active site" description="N6-AMP-lysine intermediate" evidence="1">
    <location>
        <position position="109"/>
    </location>
</feature>
<feature type="binding site" evidence="1">
    <location>
        <begin position="29"/>
        <end position="33"/>
    </location>
    <ligand>
        <name>NAD(+)</name>
        <dbReference type="ChEBI" id="CHEBI:57540"/>
    </ligand>
</feature>
<feature type="binding site" evidence="1">
    <location>
        <begin position="78"/>
        <end position="79"/>
    </location>
    <ligand>
        <name>NAD(+)</name>
        <dbReference type="ChEBI" id="CHEBI:57540"/>
    </ligand>
</feature>
<feature type="binding site" evidence="1">
    <location>
        <position position="107"/>
    </location>
    <ligand>
        <name>NAD(+)</name>
        <dbReference type="ChEBI" id="CHEBI:57540"/>
    </ligand>
</feature>
<feature type="binding site" evidence="1">
    <location>
        <position position="130"/>
    </location>
    <ligand>
        <name>NAD(+)</name>
        <dbReference type="ChEBI" id="CHEBI:57540"/>
    </ligand>
</feature>
<feature type="binding site" evidence="1">
    <location>
        <position position="164"/>
    </location>
    <ligand>
        <name>NAD(+)</name>
        <dbReference type="ChEBI" id="CHEBI:57540"/>
    </ligand>
</feature>
<feature type="binding site" evidence="1">
    <location>
        <position position="278"/>
    </location>
    <ligand>
        <name>NAD(+)</name>
        <dbReference type="ChEBI" id="CHEBI:57540"/>
    </ligand>
</feature>
<feature type="binding site" evidence="1">
    <location>
        <position position="302"/>
    </location>
    <ligand>
        <name>NAD(+)</name>
        <dbReference type="ChEBI" id="CHEBI:57540"/>
    </ligand>
</feature>
<feature type="binding site" evidence="1">
    <location>
        <position position="395"/>
    </location>
    <ligand>
        <name>Zn(2+)</name>
        <dbReference type="ChEBI" id="CHEBI:29105"/>
    </ligand>
</feature>
<feature type="binding site" evidence="1">
    <location>
        <position position="398"/>
    </location>
    <ligand>
        <name>Zn(2+)</name>
        <dbReference type="ChEBI" id="CHEBI:29105"/>
    </ligand>
</feature>
<feature type="binding site" evidence="1">
    <location>
        <position position="413"/>
    </location>
    <ligand>
        <name>Zn(2+)</name>
        <dbReference type="ChEBI" id="CHEBI:29105"/>
    </ligand>
</feature>
<feature type="binding site" evidence="1">
    <location>
        <position position="418"/>
    </location>
    <ligand>
        <name>Zn(2+)</name>
        <dbReference type="ChEBI" id="CHEBI:29105"/>
    </ligand>
</feature>